<organism>
    <name type="scientific">Frankia alni (strain DSM 45986 / CECT 9034 / ACN14a)</name>
    <dbReference type="NCBI Taxonomy" id="326424"/>
    <lineage>
        <taxon>Bacteria</taxon>
        <taxon>Bacillati</taxon>
        <taxon>Actinomycetota</taxon>
        <taxon>Actinomycetes</taxon>
        <taxon>Frankiales</taxon>
        <taxon>Frankiaceae</taxon>
        <taxon>Frankia</taxon>
    </lineage>
</organism>
<accession>Q0RRQ9</accession>
<protein>
    <recommendedName>
        <fullName evidence="1">Large ribosomal subunit protein uL5</fullName>
    </recommendedName>
    <alternativeName>
        <fullName evidence="2">50S ribosomal protein L5</fullName>
    </alternativeName>
</protein>
<gene>
    <name evidence="1" type="primary">rplE</name>
    <name type="ordered locus">FRAAL1093</name>
</gene>
<reference key="1">
    <citation type="journal article" date="2007" name="Genome Res.">
        <title>Genome characteristics of facultatively symbiotic Frankia sp. strains reflect host range and host plant biogeography.</title>
        <authorList>
            <person name="Normand P."/>
            <person name="Lapierre P."/>
            <person name="Tisa L.S."/>
            <person name="Gogarten J.P."/>
            <person name="Alloisio N."/>
            <person name="Bagnarol E."/>
            <person name="Bassi C.A."/>
            <person name="Berry A.M."/>
            <person name="Bickhart D.M."/>
            <person name="Choisne N."/>
            <person name="Couloux A."/>
            <person name="Cournoyer B."/>
            <person name="Cruveiller S."/>
            <person name="Daubin V."/>
            <person name="Demange N."/>
            <person name="Francino M.P."/>
            <person name="Goltsman E."/>
            <person name="Huang Y."/>
            <person name="Kopp O.R."/>
            <person name="Labarre L."/>
            <person name="Lapidus A."/>
            <person name="Lavire C."/>
            <person name="Marechal J."/>
            <person name="Martinez M."/>
            <person name="Mastronunzio J.E."/>
            <person name="Mullin B.C."/>
            <person name="Niemann J."/>
            <person name="Pujic P."/>
            <person name="Rawnsley T."/>
            <person name="Rouy Z."/>
            <person name="Schenowitz C."/>
            <person name="Sellstedt A."/>
            <person name="Tavares F."/>
            <person name="Tomkins J.P."/>
            <person name="Vallenet D."/>
            <person name="Valverde C."/>
            <person name="Wall L.G."/>
            <person name="Wang Y."/>
            <person name="Medigue C."/>
            <person name="Benson D.R."/>
        </authorList>
    </citation>
    <scope>NUCLEOTIDE SEQUENCE [LARGE SCALE GENOMIC DNA]</scope>
    <source>
        <strain>DSM 45986 / CECT 9034 / ACN14a</strain>
    </source>
</reference>
<feature type="chain" id="PRO_1000052735" description="Large ribosomal subunit protein uL5">
    <location>
        <begin position="1"/>
        <end position="194"/>
    </location>
</feature>
<proteinExistence type="inferred from homology"/>
<evidence type="ECO:0000255" key="1">
    <source>
        <dbReference type="HAMAP-Rule" id="MF_01333"/>
    </source>
</evidence>
<evidence type="ECO:0000305" key="2"/>
<sequence>MTVTTEDRTTGARPVPRLKQRYREEIAATLREEFSYRNVMQIPGVVKVVVNMGVGDAARDAKLIDGAVRDLAAITGQKPAVRRAKKSIAQFKLREGMPIGAKVTLRGDRMWEFLDRLVSIALPRIRDFRGLSPKQFDGAGNYTFGVTEQSIFHEIDIDRIDRVRGMDITVVTTATTDDEGRALLRALGFPFREN</sequence>
<name>RL5_FRAAA</name>
<comment type="function">
    <text evidence="1">This is one of the proteins that bind and probably mediate the attachment of the 5S RNA into the large ribosomal subunit, where it forms part of the central protuberance. In the 70S ribosome it contacts protein S13 of the 30S subunit (bridge B1b), connecting the 2 subunits; this bridge is implicated in subunit movement. Contacts the P site tRNA; the 5S rRNA and some of its associated proteins might help stabilize positioning of ribosome-bound tRNAs.</text>
</comment>
<comment type="subunit">
    <text evidence="1">Part of the 50S ribosomal subunit; part of the 5S rRNA/L5/L18/L25 subcomplex. Contacts the 5S rRNA and the P site tRNA. Forms a bridge to the 30S subunit in the 70S ribosome.</text>
</comment>
<comment type="similarity">
    <text evidence="1">Belongs to the universal ribosomal protein uL5 family.</text>
</comment>
<keyword id="KW-1185">Reference proteome</keyword>
<keyword id="KW-0687">Ribonucleoprotein</keyword>
<keyword id="KW-0689">Ribosomal protein</keyword>
<keyword id="KW-0694">RNA-binding</keyword>
<keyword id="KW-0699">rRNA-binding</keyword>
<keyword id="KW-0820">tRNA-binding</keyword>
<dbReference type="EMBL" id="CT573213">
    <property type="protein sequence ID" value="CAJ59758.1"/>
    <property type="molecule type" value="Genomic_DNA"/>
</dbReference>
<dbReference type="RefSeq" id="WP_011602307.1">
    <property type="nucleotide sequence ID" value="NC_008278.1"/>
</dbReference>
<dbReference type="SMR" id="Q0RRQ9"/>
<dbReference type="STRING" id="326424.FRAAL1093"/>
<dbReference type="KEGG" id="fal:FRAAL1093"/>
<dbReference type="eggNOG" id="COG0094">
    <property type="taxonomic scope" value="Bacteria"/>
</dbReference>
<dbReference type="HOGENOM" id="CLU_061015_2_1_11"/>
<dbReference type="OrthoDB" id="9806626at2"/>
<dbReference type="Proteomes" id="UP000000657">
    <property type="component" value="Chromosome"/>
</dbReference>
<dbReference type="GO" id="GO:1990904">
    <property type="term" value="C:ribonucleoprotein complex"/>
    <property type="evidence" value="ECO:0007669"/>
    <property type="project" value="UniProtKB-KW"/>
</dbReference>
<dbReference type="GO" id="GO:0005840">
    <property type="term" value="C:ribosome"/>
    <property type="evidence" value="ECO:0007669"/>
    <property type="project" value="UniProtKB-KW"/>
</dbReference>
<dbReference type="GO" id="GO:0019843">
    <property type="term" value="F:rRNA binding"/>
    <property type="evidence" value="ECO:0007669"/>
    <property type="project" value="UniProtKB-UniRule"/>
</dbReference>
<dbReference type="GO" id="GO:0003735">
    <property type="term" value="F:structural constituent of ribosome"/>
    <property type="evidence" value="ECO:0007669"/>
    <property type="project" value="InterPro"/>
</dbReference>
<dbReference type="GO" id="GO:0000049">
    <property type="term" value="F:tRNA binding"/>
    <property type="evidence" value="ECO:0007669"/>
    <property type="project" value="UniProtKB-UniRule"/>
</dbReference>
<dbReference type="GO" id="GO:0006412">
    <property type="term" value="P:translation"/>
    <property type="evidence" value="ECO:0007669"/>
    <property type="project" value="UniProtKB-UniRule"/>
</dbReference>
<dbReference type="FunFam" id="3.30.1440.10:FF:000001">
    <property type="entry name" value="50S ribosomal protein L5"/>
    <property type="match status" value="1"/>
</dbReference>
<dbReference type="Gene3D" id="3.30.1440.10">
    <property type="match status" value="1"/>
</dbReference>
<dbReference type="HAMAP" id="MF_01333_B">
    <property type="entry name" value="Ribosomal_uL5_B"/>
    <property type="match status" value="1"/>
</dbReference>
<dbReference type="InterPro" id="IPR002132">
    <property type="entry name" value="Ribosomal_uL5"/>
</dbReference>
<dbReference type="InterPro" id="IPR020930">
    <property type="entry name" value="Ribosomal_uL5_bac-type"/>
</dbReference>
<dbReference type="InterPro" id="IPR031309">
    <property type="entry name" value="Ribosomal_uL5_C"/>
</dbReference>
<dbReference type="InterPro" id="IPR022803">
    <property type="entry name" value="Ribosomal_uL5_dom_sf"/>
</dbReference>
<dbReference type="InterPro" id="IPR031310">
    <property type="entry name" value="Ribosomal_uL5_N"/>
</dbReference>
<dbReference type="NCBIfam" id="NF000585">
    <property type="entry name" value="PRK00010.1"/>
    <property type="match status" value="1"/>
</dbReference>
<dbReference type="PANTHER" id="PTHR11994">
    <property type="entry name" value="60S RIBOSOMAL PROTEIN L11-RELATED"/>
    <property type="match status" value="1"/>
</dbReference>
<dbReference type="Pfam" id="PF00281">
    <property type="entry name" value="Ribosomal_L5"/>
    <property type="match status" value="1"/>
</dbReference>
<dbReference type="Pfam" id="PF00673">
    <property type="entry name" value="Ribosomal_L5_C"/>
    <property type="match status" value="1"/>
</dbReference>
<dbReference type="PIRSF" id="PIRSF002161">
    <property type="entry name" value="Ribosomal_L5"/>
    <property type="match status" value="1"/>
</dbReference>
<dbReference type="SUPFAM" id="SSF55282">
    <property type="entry name" value="RL5-like"/>
    <property type="match status" value="1"/>
</dbReference>